<accession>B0SYU4</accession>
<reference key="1">
    <citation type="submission" date="2008-01" db="EMBL/GenBank/DDBJ databases">
        <title>Complete sequence of chromosome of Caulobacter sp. K31.</title>
        <authorList>
            <consortium name="US DOE Joint Genome Institute"/>
            <person name="Copeland A."/>
            <person name="Lucas S."/>
            <person name="Lapidus A."/>
            <person name="Barry K."/>
            <person name="Glavina del Rio T."/>
            <person name="Dalin E."/>
            <person name="Tice H."/>
            <person name="Pitluck S."/>
            <person name="Bruce D."/>
            <person name="Goodwin L."/>
            <person name="Thompson L.S."/>
            <person name="Brettin T."/>
            <person name="Detter J.C."/>
            <person name="Han C."/>
            <person name="Schmutz J."/>
            <person name="Larimer F."/>
            <person name="Land M."/>
            <person name="Hauser L."/>
            <person name="Kyrpides N."/>
            <person name="Kim E."/>
            <person name="Stephens C."/>
            <person name="Richardson P."/>
        </authorList>
    </citation>
    <scope>NUCLEOTIDE SEQUENCE [LARGE SCALE GENOMIC DNA]</scope>
    <source>
        <strain>K31</strain>
    </source>
</reference>
<keyword id="KW-0963">Cytoplasm</keyword>
<keyword id="KW-0369">Histidine metabolism</keyword>
<keyword id="KW-0456">Lyase</keyword>
<keyword id="KW-0520">NAD</keyword>
<organism>
    <name type="scientific">Caulobacter sp. (strain K31)</name>
    <dbReference type="NCBI Taxonomy" id="366602"/>
    <lineage>
        <taxon>Bacteria</taxon>
        <taxon>Pseudomonadati</taxon>
        <taxon>Pseudomonadota</taxon>
        <taxon>Alphaproteobacteria</taxon>
        <taxon>Caulobacterales</taxon>
        <taxon>Caulobacteraceae</taxon>
        <taxon>Caulobacter</taxon>
    </lineage>
</organism>
<proteinExistence type="inferred from homology"/>
<comment type="function">
    <text evidence="1">Catalyzes the conversion of urocanate to 4-imidazolone-5-propionate.</text>
</comment>
<comment type="catalytic activity">
    <reaction evidence="1">
        <text>4-imidazolone-5-propanoate = trans-urocanate + H2O</text>
        <dbReference type="Rhea" id="RHEA:13101"/>
        <dbReference type="ChEBI" id="CHEBI:15377"/>
        <dbReference type="ChEBI" id="CHEBI:17771"/>
        <dbReference type="ChEBI" id="CHEBI:77893"/>
        <dbReference type="EC" id="4.2.1.49"/>
    </reaction>
</comment>
<comment type="cofactor">
    <cofactor evidence="1">
        <name>NAD(+)</name>
        <dbReference type="ChEBI" id="CHEBI:57540"/>
    </cofactor>
    <text evidence="1">Binds 1 NAD(+) per subunit.</text>
</comment>
<comment type="pathway">
    <text evidence="1">Amino-acid degradation; L-histidine degradation into L-glutamate; N-formimidoyl-L-glutamate from L-histidine: step 2/3.</text>
</comment>
<comment type="subcellular location">
    <subcellularLocation>
        <location evidence="1">Cytoplasm</location>
    </subcellularLocation>
</comment>
<comment type="similarity">
    <text evidence="1">Belongs to the urocanase family.</text>
</comment>
<feature type="chain" id="PRO_1000082349" description="Urocanate hydratase">
    <location>
        <begin position="1"/>
        <end position="554"/>
    </location>
</feature>
<feature type="active site" evidence="1">
    <location>
        <position position="409"/>
    </location>
</feature>
<feature type="binding site" evidence="1">
    <location>
        <begin position="51"/>
        <end position="52"/>
    </location>
    <ligand>
        <name>NAD(+)</name>
        <dbReference type="ChEBI" id="CHEBI:57540"/>
    </ligand>
</feature>
<feature type="binding site" evidence="1">
    <location>
        <position position="129"/>
    </location>
    <ligand>
        <name>NAD(+)</name>
        <dbReference type="ChEBI" id="CHEBI:57540"/>
    </ligand>
</feature>
<feature type="binding site" evidence="1">
    <location>
        <begin position="175"/>
        <end position="177"/>
    </location>
    <ligand>
        <name>NAD(+)</name>
        <dbReference type="ChEBI" id="CHEBI:57540"/>
    </ligand>
</feature>
<feature type="binding site" evidence="1">
    <location>
        <position position="195"/>
    </location>
    <ligand>
        <name>NAD(+)</name>
        <dbReference type="ChEBI" id="CHEBI:57540"/>
    </ligand>
</feature>
<feature type="binding site" evidence="1">
    <location>
        <position position="200"/>
    </location>
    <ligand>
        <name>NAD(+)</name>
        <dbReference type="ChEBI" id="CHEBI:57540"/>
    </ligand>
</feature>
<feature type="binding site" evidence="1">
    <location>
        <begin position="241"/>
        <end position="242"/>
    </location>
    <ligand>
        <name>NAD(+)</name>
        <dbReference type="ChEBI" id="CHEBI:57540"/>
    </ligand>
</feature>
<feature type="binding site" evidence="1">
    <location>
        <begin position="262"/>
        <end position="266"/>
    </location>
    <ligand>
        <name>NAD(+)</name>
        <dbReference type="ChEBI" id="CHEBI:57540"/>
    </ligand>
</feature>
<feature type="binding site" evidence="1">
    <location>
        <begin position="272"/>
        <end position="273"/>
    </location>
    <ligand>
        <name>NAD(+)</name>
        <dbReference type="ChEBI" id="CHEBI:57540"/>
    </ligand>
</feature>
<feature type="binding site" evidence="1">
    <location>
        <position position="321"/>
    </location>
    <ligand>
        <name>NAD(+)</name>
        <dbReference type="ChEBI" id="CHEBI:57540"/>
    </ligand>
</feature>
<feature type="binding site" evidence="1">
    <location>
        <position position="491"/>
    </location>
    <ligand>
        <name>NAD(+)</name>
        <dbReference type="ChEBI" id="CHEBI:57540"/>
    </ligand>
</feature>
<protein>
    <recommendedName>
        <fullName evidence="1">Urocanate hydratase</fullName>
        <shortName evidence="1">Urocanase</shortName>
        <ecNumber evidence="1">4.2.1.49</ecNumber>
    </recommendedName>
    <alternativeName>
        <fullName evidence="1">Imidazolonepropionate hydrolase</fullName>
    </alternativeName>
</protein>
<gene>
    <name evidence="1" type="primary">hutU</name>
    <name type="ordered locus">Caul_1295</name>
</gene>
<dbReference type="EC" id="4.2.1.49" evidence="1"/>
<dbReference type="EMBL" id="CP000927">
    <property type="protein sequence ID" value="ABZ70425.1"/>
    <property type="molecule type" value="Genomic_DNA"/>
</dbReference>
<dbReference type="SMR" id="B0SYU4"/>
<dbReference type="STRING" id="366602.Caul_1295"/>
<dbReference type="KEGG" id="cak:Caul_1295"/>
<dbReference type="eggNOG" id="COG2987">
    <property type="taxonomic scope" value="Bacteria"/>
</dbReference>
<dbReference type="HOGENOM" id="CLU_018868_0_1_5"/>
<dbReference type="OrthoDB" id="9764874at2"/>
<dbReference type="UniPathway" id="UPA00379">
    <property type="reaction ID" value="UER00550"/>
</dbReference>
<dbReference type="GO" id="GO:0005737">
    <property type="term" value="C:cytoplasm"/>
    <property type="evidence" value="ECO:0007669"/>
    <property type="project" value="UniProtKB-SubCell"/>
</dbReference>
<dbReference type="GO" id="GO:0016153">
    <property type="term" value="F:urocanate hydratase activity"/>
    <property type="evidence" value="ECO:0007669"/>
    <property type="project" value="UniProtKB-UniRule"/>
</dbReference>
<dbReference type="GO" id="GO:0019556">
    <property type="term" value="P:L-histidine catabolic process to glutamate and formamide"/>
    <property type="evidence" value="ECO:0007669"/>
    <property type="project" value="UniProtKB-UniPathway"/>
</dbReference>
<dbReference type="GO" id="GO:0019557">
    <property type="term" value="P:L-histidine catabolic process to glutamate and formate"/>
    <property type="evidence" value="ECO:0007669"/>
    <property type="project" value="UniProtKB-UniPathway"/>
</dbReference>
<dbReference type="FunFam" id="3.40.50.10730:FF:000001">
    <property type="entry name" value="Urocanate hydratase"/>
    <property type="match status" value="1"/>
</dbReference>
<dbReference type="Gene3D" id="3.40.50.10730">
    <property type="entry name" value="Urocanase like domains"/>
    <property type="match status" value="1"/>
</dbReference>
<dbReference type="Gene3D" id="3.40.1770.10">
    <property type="entry name" value="Urocanase superfamily"/>
    <property type="match status" value="1"/>
</dbReference>
<dbReference type="HAMAP" id="MF_00577">
    <property type="entry name" value="HutU"/>
    <property type="match status" value="1"/>
</dbReference>
<dbReference type="InterPro" id="IPR055351">
    <property type="entry name" value="Urocanase"/>
</dbReference>
<dbReference type="InterPro" id="IPR023637">
    <property type="entry name" value="Urocanase-like"/>
</dbReference>
<dbReference type="InterPro" id="IPR035401">
    <property type="entry name" value="Urocanase_C"/>
</dbReference>
<dbReference type="InterPro" id="IPR038364">
    <property type="entry name" value="Urocanase_central_sf"/>
</dbReference>
<dbReference type="InterPro" id="IPR023636">
    <property type="entry name" value="Urocanase_CS"/>
</dbReference>
<dbReference type="InterPro" id="IPR035400">
    <property type="entry name" value="Urocanase_N"/>
</dbReference>
<dbReference type="InterPro" id="IPR035085">
    <property type="entry name" value="Urocanase_Rossmann-like"/>
</dbReference>
<dbReference type="InterPro" id="IPR036190">
    <property type="entry name" value="Urocanase_sf"/>
</dbReference>
<dbReference type="NCBIfam" id="TIGR01228">
    <property type="entry name" value="hutU"/>
    <property type="match status" value="1"/>
</dbReference>
<dbReference type="NCBIfam" id="NF003820">
    <property type="entry name" value="PRK05414.1"/>
    <property type="match status" value="1"/>
</dbReference>
<dbReference type="PANTHER" id="PTHR12216">
    <property type="entry name" value="UROCANATE HYDRATASE"/>
    <property type="match status" value="1"/>
</dbReference>
<dbReference type="PANTHER" id="PTHR12216:SF4">
    <property type="entry name" value="UROCANATE HYDRATASE"/>
    <property type="match status" value="1"/>
</dbReference>
<dbReference type="Pfam" id="PF01175">
    <property type="entry name" value="Urocanase"/>
    <property type="match status" value="1"/>
</dbReference>
<dbReference type="Pfam" id="PF17392">
    <property type="entry name" value="Urocanase_C"/>
    <property type="match status" value="1"/>
</dbReference>
<dbReference type="Pfam" id="PF17391">
    <property type="entry name" value="Urocanase_N"/>
    <property type="match status" value="1"/>
</dbReference>
<dbReference type="PIRSF" id="PIRSF001423">
    <property type="entry name" value="Urocanate_hydrat"/>
    <property type="match status" value="1"/>
</dbReference>
<dbReference type="SUPFAM" id="SSF111326">
    <property type="entry name" value="Urocanase"/>
    <property type="match status" value="1"/>
</dbReference>
<dbReference type="PROSITE" id="PS01233">
    <property type="entry name" value="UROCANASE"/>
    <property type="match status" value="1"/>
</dbReference>
<evidence type="ECO:0000255" key="1">
    <source>
        <dbReference type="HAMAP-Rule" id="MF_00577"/>
    </source>
</evidence>
<sequence length="554" mass="59872">MTRLDNTRVIRPATGTELTAKSWLTEAPLRMLMNNLHPDVAERPEELVVYGGIGRAARDWESYDKIVETLRRLEDDETLLVQSGKPVGVFKTHPDAPRVLIANSNLVPRWATWEHFNELDRKGLAMYGQMTAGSWIYIGAQGIVQGTYETFVEMGRQHHGGDLAGKWLLTAGLGGMGGAQPLAAVMAGASCLAIECQPSRIEMRLRTGYLDKATERLDEALAWIAEANAAKAPVSVGLLGNAAELLPAMFAAGVRPDLLTDQTSAHDPINGYLPAGWTLDQWATAKEREPETVNRAARASMAVHVQAMLDFQAAGVPTVDYGNNIRQMALEEGVKNAFDFPGFVPAYIRPLFCRGIGPFRWAALSGDPEDIAKTDAKVKELIPDNPHLHHWLDMAAEKIKFQGLPARICWVGLGDRHRLGLAFNAMVASGELKAPVVIGRDHLDSGSVASPNRETEAMMDGSDAVSDWPLLNALLNTASGATWVSLHHGGGVGMGFSQHAGMVIVADGTEAAAKRLARVLWNDPASGVMRHADAGYEIAKACAREHGLDLPGIL</sequence>
<name>HUTU_CAUSK</name>